<comment type="subunit">
    <text evidence="1">Part of the 50S ribosomal subunit.</text>
</comment>
<comment type="similarity">
    <text evidence="1">Belongs to the universal ribosomal protein uL30 family.</text>
</comment>
<evidence type="ECO:0000255" key="1">
    <source>
        <dbReference type="HAMAP-Rule" id="MF_01371"/>
    </source>
</evidence>
<evidence type="ECO:0000305" key="2"/>
<organism>
    <name type="scientific">Carboxydothermus hydrogenoformans (strain ATCC BAA-161 / DSM 6008 / Z-2901)</name>
    <dbReference type="NCBI Taxonomy" id="246194"/>
    <lineage>
        <taxon>Bacteria</taxon>
        <taxon>Bacillati</taxon>
        <taxon>Bacillota</taxon>
        <taxon>Clostridia</taxon>
        <taxon>Thermoanaerobacterales</taxon>
        <taxon>Thermoanaerobacteraceae</taxon>
        <taxon>Carboxydothermus</taxon>
    </lineage>
</organism>
<accession>Q3A9T4</accession>
<gene>
    <name evidence="1" type="primary">rpmD</name>
    <name type="ordered locus">CHY_2291</name>
</gene>
<feature type="chain" id="PRO_0000273764" description="Large ribosomal subunit protein uL30">
    <location>
        <begin position="1"/>
        <end position="60"/>
    </location>
</feature>
<keyword id="KW-1185">Reference proteome</keyword>
<keyword id="KW-0687">Ribonucleoprotein</keyword>
<keyword id="KW-0689">Ribosomal protein</keyword>
<protein>
    <recommendedName>
        <fullName evidence="1">Large ribosomal subunit protein uL30</fullName>
    </recommendedName>
    <alternativeName>
        <fullName evidence="2">50S ribosomal protein L30</fullName>
    </alternativeName>
</protein>
<proteinExistence type="inferred from homology"/>
<dbReference type="EMBL" id="CP000141">
    <property type="protein sequence ID" value="ABB15611.1"/>
    <property type="molecule type" value="Genomic_DNA"/>
</dbReference>
<dbReference type="RefSeq" id="WP_011345173.1">
    <property type="nucleotide sequence ID" value="NC_007503.1"/>
</dbReference>
<dbReference type="SMR" id="Q3A9T4"/>
<dbReference type="FunCoup" id="Q3A9T4">
    <property type="interactions" value="298"/>
</dbReference>
<dbReference type="STRING" id="246194.CHY_2291"/>
<dbReference type="KEGG" id="chy:CHY_2291"/>
<dbReference type="eggNOG" id="COG1841">
    <property type="taxonomic scope" value="Bacteria"/>
</dbReference>
<dbReference type="HOGENOM" id="CLU_131047_2_1_9"/>
<dbReference type="InParanoid" id="Q3A9T4"/>
<dbReference type="OrthoDB" id="9812790at2"/>
<dbReference type="Proteomes" id="UP000002706">
    <property type="component" value="Chromosome"/>
</dbReference>
<dbReference type="GO" id="GO:0022625">
    <property type="term" value="C:cytosolic large ribosomal subunit"/>
    <property type="evidence" value="ECO:0007669"/>
    <property type="project" value="TreeGrafter"/>
</dbReference>
<dbReference type="GO" id="GO:0003735">
    <property type="term" value="F:structural constituent of ribosome"/>
    <property type="evidence" value="ECO:0007669"/>
    <property type="project" value="InterPro"/>
</dbReference>
<dbReference type="GO" id="GO:0006412">
    <property type="term" value="P:translation"/>
    <property type="evidence" value="ECO:0007669"/>
    <property type="project" value="UniProtKB-UniRule"/>
</dbReference>
<dbReference type="CDD" id="cd01658">
    <property type="entry name" value="Ribosomal_L30"/>
    <property type="match status" value="1"/>
</dbReference>
<dbReference type="FunFam" id="3.30.1390.20:FF:000001">
    <property type="entry name" value="50S ribosomal protein L30"/>
    <property type="match status" value="1"/>
</dbReference>
<dbReference type="Gene3D" id="3.30.1390.20">
    <property type="entry name" value="Ribosomal protein L30, ferredoxin-like fold domain"/>
    <property type="match status" value="1"/>
</dbReference>
<dbReference type="HAMAP" id="MF_01371_B">
    <property type="entry name" value="Ribosomal_uL30_B"/>
    <property type="match status" value="1"/>
</dbReference>
<dbReference type="InterPro" id="IPR036919">
    <property type="entry name" value="Ribo_uL30_ferredoxin-like_sf"/>
</dbReference>
<dbReference type="InterPro" id="IPR005996">
    <property type="entry name" value="Ribosomal_uL30_bac-type"/>
</dbReference>
<dbReference type="InterPro" id="IPR016082">
    <property type="entry name" value="Ribosomal_uL30_ferredoxin-like"/>
</dbReference>
<dbReference type="NCBIfam" id="TIGR01308">
    <property type="entry name" value="rpmD_bact"/>
    <property type="match status" value="1"/>
</dbReference>
<dbReference type="PANTHER" id="PTHR15892:SF2">
    <property type="entry name" value="LARGE RIBOSOMAL SUBUNIT PROTEIN UL30M"/>
    <property type="match status" value="1"/>
</dbReference>
<dbReference type="PANTHER" id="PTHR15892">
    <property type="entry name" value="MITOCHONDRIAL RIBOSOMAL PROTEIN L30"/>
    <property type="match status" value="1"/>
</dbReference>
<dbReference type="Pfam" id="PF00327">
    <property type="entry name" value="Ribosomal_L30"/>
    <property type="match status" value="1"/>
</dbReference>
<dbReference type="PIRSF" id="PIRSF002211">
    <property type="entry name" value="Ribosomal_L30_bac-type"/>
    <property type="match status" value="1"/>
</dbReference>
<dbReference type="SUPFAM" id="SSF55129">
    <property type="entry name" value="Ribosomal protein L30p/L7e"/>
    <property type="match status" value="1"/>
</dbReference>
<sequence>MEKKLKITLVKSVIGQSERQKATVKSLGLRKLNQTVIKADTPEIRGMINKVSHLLKVEEI</sequence>
<reference key="1">
    <citation type="journal article" date="2005" name="PLoS Genet.">
        <title>Life in hot carbon monoxide: the complete genome sequence of Carboxydothermus hydrogenoformans Z-2901.</title>
        <authorList>
            <person name="Wu M."/>
            <person name="Ren Q."/>
            <person name="Durkin A.S."/>
            <person name="Daugherty S.C."/>
            <person name="Brinkac L.M."/>
            <person name="Dodson R.J."/>
            <person name="Madupu R."/>
            <person name="Sullivan S.A."/>
            <person name="Kolonay J.F."/>
            <person name="Nelson W.C."/>
            <person name="Tallon L.J."/>
            <person name="Jones K.M."/>
            <person name="Ulrich L.E."/>
            <person name="Gonzalez J.M."/>
            <person name="Zhulin I.B."/>
            <person name="Robb F.T."/>
            <person name="Eisen J.A."/>
        </authorList>
    </citation>
    <scope>NUCLEOTIDE SEQUENCE [LARGE SCALE GENOMIC DNA]</scope>
    <source>
        <strain>ATCC BAA-161 / DSM 6008 / Z-2901</strain>
    </source>
</reference>
<name>RL30_CARHZ</name>